<gene>
    <name evidence="1" type="primary">bioD</name>
    <name type="ordered locus">blr2098</name>
    <name type="ORF">id903</name>
</gene>
<dbReference type="EC" id="6.3.3.3" evidence="1"/>
<dbReference type="EMBL" id="AH010242">
    <property type="protein sequence ID" value="AAG61073.1"/>
    <property type="molecule type" value="Genomic_DNA"/>
</dbReference>
<dbReference type="EMBL" id="BA000040">
    <property type="protein sequence ID" value="BAC47363.1"/>
    <property type="molecule type" value="Genomic_DNA"/>
</dbReference>
<dbReference type="RefSeq" id="NP_768738.1">
    <property type="nucleotide sequence ID" value="NC_004463.1"/>
</dbReference>
<dbReference type="RefSeq" id="WP_011084893.1">
    <property type="nucleotide sequence ID" value="NZ_CP011360.1"/>
</dbReference>
<dbReference type="SMR" id="Q9AMS4"/>
<dbReference type="FunCoup" id="Q9AMS4">
    <property type="interactions" value="528"/>
</dbReference>
<dbReference type="STRING" id="224911.AAV28_07320"/>
<dbReference type="EnsemblBacteria" id="BAC47363">
    <property type="protein sequence ID" value="BAC47363"/>
    <property type="gene ID" value="BAC47363"/>
</dbReference>
<dbReference type="GeneID" id="93214476"/>
<dbReference type="KEGG" id="bja:blr2098"/>
<dbReference type="PATRIC" id="fig|224911.44.peg.1607"/>
<dbReference type="eggNOG" id="COG0132">
    <property type="taxonomic scope" value="Bacteria"/>
</dbReference>
<dbReference type="HOGENOM" id="CLU_072551_2_0_5"/>
<dbReference type="InParanoid" id="Q9AMS4"/>
<dbReference type="OrthoDB" id="9802097at2"/>
<dbReference type="PhylomeDB" id="Q9AMS4"/>
<dbReference type="UniPathway" id="UPA00078">
    <property type="reaction ID" value="UER00161"/>
</dbReference>
<dbReference type="Proteomes" id="UP000002526">
    <property type="component" value="Chromosome"/>
</dbReference>
<dbReference type="GO" id="GO:0005829">
    <property type="term" value="C:cytosol"/>
    <property type="evidence" value="ECO:0000318"/>
    <property type="project" value="GO_Central"/>
</dbReference>
<dbReference type="GO" id="GO:0005524">
    <property type="term" value="F:ATP binding"/>
    <property type="evidence" value="ECO:0007669"/>
    <property type="project" value="UniProtKB-UniRule"/>
</dbReference>
<dbReference type="GO" id="GO:0004141">
    <property type="term" value="F:dethiobiotin synthase activity"/>
    <property type="evidence" value="ECO:0000318"/>
    <property type="project" value="GO_Central"/>
</dbReference>
<dbReference type="GO" id="GO:0000287">
    <property type="term" value="F:magnesium ion binding"/>
    <property type="evidence" value="ECO:0007669"/>
    <property type="project" value="UniProtKB-UniRule"/>
</dbReference>
<dbReference type="GO" id="GO:0009102">
    <property type="term" value="P:biotin biosynthetic process"/>
    <property type="evidence" value="ECO:0000318"/>
    <property type="project" value="GO_Central"/>
</dbReference>
<dbReference type="CDD" id="cd03109">
    <property type="entry name" value="DTBS"/>
    <property type="match status" value="1"/>
</dbReference>
<dbReference type="FunFam" id="3.40.50.300:FF:003064">
    <property type="entry name" value="ATP-dependent dethiobiotin synthetase BioD"/>
    <property type="match status" value="1"/>
</dbReference>
<dbReference type="Gene3D" id="3.40.50.300">
    <property type="entry name" value="P-loop containing nucleotide triphosphate hydrolases"/>
    <property type="match status" value="1"/>
</dbReference>
<dbReference type="HAMAP" id="MF_00336">
    <property type="entry name" value="BioD"/>
    <property type="match status" value="1"/>
</dbReference>
<dbReference type="InterPro" id="IPR004472">
    <property type="entry name" value="DTB_synth_BioD"/>
</dbReference>
<dbReference type="InterPro" id="IPR027417">
    <property type="entry name" value="P-loop_NTPase"/>
</dbReference>
<dbReference type="NCBIfam" id="TIGR00347">
    <property type="entry name" value="bioD"/>
    <property type="match status" value="1"/>
</dbReference>
<dbReference type="PANTHER" id="PTHR43210:SF2">
    <property type="entry name" value="ATP-DEPENDENT DETHIOBIOTIN SYNTHETASE BIOD 2"/>
    <property type="match status" value="1"/>
</dbReference>
<dbReference type="PANTHER" id="PTHR43210">
    <property type="entry name" value="DETHIOBIOTIN SYNTHETASE"/>
    <property type="match status" value="1"/>
</dbReference>
<dbReference type="Pfam" id="PF13500">
    <property type="entry name" value="AAA_26"/>
    <property type="match status" value="1"/>
</dbReference>
<dbReference type="PIRSF" id="PIRSF006755">
    <property type="entry name" value="DTB_synth"/>
    <property type="match status" value="1"/>
</dbReference>
<dbReference type="SUPFAM" id="SSF52540">
    <property type="entry name" value="P-loop containing nucleoside triphosphate hydrolases"/>
    <property type="match status" value="1"/>
</dbReference>
<sequence>MNKRIVVTGTDTGVGKTVFSAGLAGLLGANYWKPVQAGLEQEIDSECIRRLGGLSSDRIVPELYRLRTPASPHHSAEIDGVRIDTETLGLPDSGERRLVIEGAGGLMVPLTARTLYIDIFERWQLPVVLCARTGLGTINHSLLSIEALRKRQIRILGIAFIGERNAETESAVCEIGRVRWLGRLPWLVPLTNDRLQAAFKDSFVSSDFLNL</sequence>
<reference key="1">
    <citation type="journal article" date="2001" name="J. Bacteriol.">
        <title>Potential symbiosis-specific genes uncovered by sequencing a 410-kb DNA region of the Bradyrhizobium japonicum chromosome.</title>
        <authorList>
            <person name="Goettfert M."/>
            <person name="Roethlisberger S."/>
            <person name="Kuendig C."/>
            <person name="Beck C."/>
            <person name="Marty R."/>
            <person name="Hennecke H."/>
        </authorList>
    </citation>
    <scope>NUCLEOTIDE SEQUENCE [GENOMIC DNA]</scope>
    <source>
        <strain>USDA 110spc4</strain>
    </source>
</reference>
<reference key="2">
    <citation type="journal article" date="2002" name="DNA Res.">
        <title>Complete genomic sequence of nitrogen-fixing symbiotic bacterium Bradyrhizobium japonicum USDA110.</title>
        <authorList>
            <person name="Kaneko T."/>
            <person name="Nakamura Y."/>
            <person name="Sato S."/>
            <person name="Minamisawa K."/>
            <person name="Uchiumi T."/>
            <person name="Sasamoto S."/>
            <person name="Watanabe A."/>
            <person name="Idesawa K."/>
            <person name="Iriguchi M."/>
            <person name="Kawashima K."/>
            <person name="Kohara M."/>
            <person name="Matsumoto M."/>
            <person name="Shimpo S."/>
            <person name="Tsuruoka H."/>
            <person name="Wada T."/>
            <person name="Yamada M."/>
            <person name="Tabata S."/>
        </authorList>
    </citation>
    <scope>NUCLEOTIDE SEQUENCE [LARGE SCALE GENOMIC DNA]</scope>
    <source>
        <strain>JCM 10833 / BCRC 13528 / IAM 13628 / NBRC 14792 / USDA 110</strain>
    </source>
</reference>
<accession>Q9AMS4</accession>
<accession>Q79UC2</accession>
<proteinExistence type="inferred from homology"/>
<name>BIOD_BRADU</name>
<keyword id="KW-0067">ATP-binding</keyword>
<keyword id="KW-0093">Biotin biosynthesis</keyword>
<keyword id="KW-0963">Cytoplasm</keyword>
<keyword id="KW-0436">Ligase</keyword>
<keyword id="KW-0460">Magnesium</keyword>
<keyword id="KW-0479">Metal-binding</keyword>
<keyword id="KW-0547">Nucleotide-binding</keyword>
<keyword id="KW-1185">Reference proteome</keyword>
<comment type="function">
    <text evidence="1">Catalyzes a mechanistically unusual reaction, the ATP-dependent insertion of CO2 between the N7 and N8 nitrogen atoms of 7,8-diaminopelargonic acid (DAPA, also called 7,8-diammoniononanoate) to form a ureido ring.</text>
</comment>
<comment type="catalytic activity">
    <reaction evidence="1">
        <text>(7R,8S)-7,8-diammoniononanoate + CO2 + ATP = (4R,5S)-dethiobiotin + ADP + phosphate + 3 H(+)</text>
        <dbReference type="Rhea" id="RHEA:15805"/>
        <dbReference type="ChEBI" id="CHEBI:15378"/>
        <dbReference type="ChEBI" id="CHEBI:16526"/>
        <dbReference type="ChEBI" id="CHEBI:30616"/>
        <dbReference type="ChEBI" id="CHEBI:43474"/>
        <dbReference type="ChEBI" id="CHEBI:149469"/>
        <dbReference type="ChEBI" id="CHEBI:149473"/>
        <dbReference type="ChEBI" id="CHEBI:456216"/>
        <dbReference type="EC" id="6.3.3.3"/>
    </reaction>
</comment>
<comment type="cofactor">
    <cofactor evidence="1">
        <name>Mg(2+)</name>
        <dbReference type="ChEBI" id="CHEBI:18420"/>
    </cofactor>
</comment>
<comment type="pathway">
    <text evidence="1">Cofactor biosynthesis; biotin biosynthesis; biotin from 7,8-diaminononanoate: step 1/2.</text>
</comment>
<comment type="subunit">
    <text evidence="1">Homodimer.</text>
</comment>
<comment type="subcellular location">
    <subcellularLocation>
        <location evidence="1">Cytoplasm</location>
    </subcellularLocation>
</comment>
<comment type="similarity">
    <text evidence="1">Belongs to the dethiobiotin synthetase family.</text>
</comment>
<feature type="chain" id="PRO_0000302482" description="ATP-dependent dethiobiotin synthetase BioD">
    <location>
        <begin position="1"/>
        <end position="211"/>
    </location>
</feature>
<feature type="active site" evidence="1">
    <location>
        <position position="33"/>
    </location>
</feature>
<feature type="binding site" evidence="1">
    <location>
        <begin position="13"/>
        <end position="18"/>
    </location>
    <ligand>
        <name>ATP</name>
        <dbReference type="ChEBI" id="CHEBI:30616"/>
    </ligand>
</feature>
<feature type="binding site" evidence="1">
    <location>
        <position position="17"/>
    </location>
    <ligand>
        <name>Mg(2+)</name>
        <dbReference type="ChEBI" id="CHEBI:18420"/>
    </ligand>
</feature>
<feature type="binding site" evidence="1">
    <location>
        <position position="47"/>
    </location>
    <ligand>
        <name>Mg(2+)</name>
        <dbReference type="ChEBI" id="CHEBI:18420"/>
    </ligand>
</feature>
<feature type="binding site" evidence="1">
    <location>
        <begin position="101"/>
        <end position="104"/>
    </location>
    <ligand>
        <name>ATP</name>
        <dbReference type="ChEBI" id="CHEBI:30616"/>
    </ligand>
</feature>
<feature type="binding site" evidence="1">
    <location>
        <position position="101"/>
    </location>
    <ligand>
        <name>Mg(2+)</name>
        <dbReference type="ChEBI" id="CHEBI:18420"/>
    </ligand>
</feature>
<feature type="binding site" evidence="1">
    <location>
        <begin position="185"/>
        <end position="187"/>
    </location>
    <ligand>
        <name>ATP</name>
        <dbReference type="ChEBI" id="CHEBI:30616"/>
    </ligand>
</feature>
<feature type="binding site" evidence="1">
    <location>
        <position position="192"/>
    </location>
    <ligand>
        <name>ATP</name>
        <dbReference type="ChEBI" id="CHEBI:30616"/>
    </ligand>
</feature>
<protein>
    <recommendedName>
        <fullName evidence="1">ATP-dependent dethiobiotin synthetase BioD</fullName>
        <ecNumber evidence="1">6.3.3.3</ecNumber>
    </recommendedName>
    <alternativeName>
        <fullName evidence="1">DTB synthetase</fullName>
        <shortName evidence="1">DTBS</shortName>
    </alternativeName>
    <alternativeName>
        <fullName evidence="1">Dethiobiotin synthase</fullName>
    </alternativeName>
</protein>
<organism>
    <name type="scientific">Bradyrhizobium diazoefficiens (strain JCM 10833 / BCRC 13528 / IAM 13628 / NBRC 14792 / USDA 110)</name>
    <dbReference type="NCBI Taxonomy" id="224911"/>
    <lineage>
        <taxon>Bacteria</taxon>
        <taxon>Pseudomonadati</taxon>
        <taxon>Pseudomonadota</taxon>
        <taxon>Alphaproteobacteria</taxon>
        <taxon>Hyphomicrobiales</taxon>
        <taxon>Nitrobacteraceae</taxon>
        <taxon>Bradyrhizobium</taxon>
    </lineage>
</organism>
<evidence type="ECO:0000255" key="1">
    <source>
        <dbReference type="HAMAP-Rule" id="MF_00336"/>
    </source>
</evidence>